<name>PR23A_HUMAN</name>
<evidence type="ECO:0000256" key="1">
    <source>
        <dbReference type="SAM" id="MobiDB-lite"/>
    </source>
</evidence>
<evidence type="ECO:0000305" key="2"/>
<protein>
    <recommendedName>
        <fullName>Proline-rich protein 23A</fullName>
    </recommendedName>
</protein>
<feature type="chain" id="PRO_0000332252" description="Proline-rich protein 23A">
    <location>
        <begin position="1"/>
        <end position="266"/>
    </location>
</feature>
<feature type="region of interest" description="Disordered" evidence="1">
    <location>
        <begin position="1"/>
        <end position="47"/>
    </location>
</feature>
<feature type="region of interest" description="Disordered" evidence="1">
    <location>
        <begin position="197"/>
        <end position="266"/>
    </location>
</feature>
<feature type="compositionally biased region" description="Low complexity" evidence="1">
    <location>
        <begin position="1"/>
        <end position="18"/>
    </location>
</feature>
<feature type="compositionally biased region" description="Pro residues" evidence="1">
    <location>
        <begin position="227"/>
        <end position="238"/>
    </location>
</feature>
<feature type="compositionally biased region" description="Basic residues" evidence="1">
    <location>
        <begin position="255"/>
        <end position="266"/>
    </location>
</feature>
<sequence length="266" mass="28155">MGSRPRSPSAFPAPWWGQQPGGPGPAKRLRLEEPAGPEPRVAPSLEDPAGTPAVGALTSIVVLAAGCALRVPLDDVDLVLELPPTSILRVSLDGHTLILIPEVLLSSVDERSGAQDDSSAGLEVDVFLGALREDVVVEQEVFCASVPEIAAQEEAYEEDADPEFPELQMDSAAGSAAGLYSSARSMFSPYREGPIPEPCALAPNPSSEGHSPGPFFDPEFRLLEPVPSSPLQPLPPSPRVGSPGPHAHPPLPKRPPCKARRRLFQE</sequence>
<comment type="similarity">
    <text evidence="2">Belongs to the PRR23 family.</text>
</comment>
<proteinExistence type="inferred from homology"/>
<reference key="1">
    <citation type="journal article" date="2006" name="Nature">
        <title>The DNA sequence, annotation and analysis of human chromosome 3.</title>
        <authorList>
            <person name="Muzny D.M."/>
            <person name="Scherer S.E."/>
            <person name="Kaul R."/>
            <person name="Wang J."/>
            <person name="Yu J."/>
            <person name="Sudbrak R."/>
            <person name="Buhay C.J."/>
            <person name="Chen R."/>
            <person name="Cree A."/>
            <person name="Ding Y."/>
            <person name="Dugan-Rocha S."/>
            <person name="Gill R."/>
            <person name="Gunaratne P."/>
            <person name="Harris R.A."/>
            <person name="Hawes A.C."/>
            <person name="Hernandez J."/>
            <person name="Hodgson A.V."/>
            <person name="Hume J."/>
            <person name="Jackson A."/>
            <person name="Khan Z.M."/>
            <person name="Kovar-Smith C."/>
            <person name="Lewis L.R."/>
            <person name="Lozado R.J."/>
            <person name="Metzker M.L."/>
            <person name="Milosavljevic A."/>
            <person name="Miner G.R."/>
            <person name="Morgan M.B."/>
            <person name="Nazareth L.V."/>
            <person name="Scott G."/>
            <person name="Sodergren E."/>
            <person name="Song X.-Z."/>
            <person name="Steffen D."/>
            <person name="Wei S."/>
            <person name="Wheeler D.A."/>
            <person name="Wright M.W."/>
            <person name="Worley K.C."/>
            <person name="Yuan Y."/>
            <person name="Zhang Z."/>
            <person name="Adams C.Q."/>
            <person name="Ansari-Lari M.A."/>
            <person name="Ayele M."/>
            <person name="Brown M.J."/>
            <person name="Chen G."/>
            <person name="Chen Z."/>
            <person name="Clendenning J."/>
            <person name="Clerc-Blankenburg K.P."/>
            <person name="Chen R."/>
            <person name="Chen Z."/>
            <person name="Davis C."/>
            <person name="Delgado O."/>
            <person name="Dinh H.H."/>
            <person name="Dong W."/>
            <person name="Draper H."/>
            <person name="Ernst S."/>
            <person name="Fu G."/>
            <person name="Gonzalez-Garay M.L."/>
            <person name="Garcia D.K."/>
            <person name="Gillett W."/>
            <person name="Gu J."/>
            <person name="Hao B."/>
            <person name="Haugen E."/>
            <person name="Havlak P."/>
            <person name="He X."/>
            <person name="Hennig S."/>
            <person name="Hu S."/>
            <person name="Huang W."/>
            <person name="Jackson L.R."/>
            <person name="Jacob L.S."/>
            <person name="Kelly S.H."/>
            <person name="Kube M."/>
            <person name="Levy R."/>
            <person name="Li Z."/>
            <person name="Liu B."/>
            <person name="Liu J."/>
            <person name="Liu W."/>
            <person name="Lu J."/>
            <person name="Maheshwari M."/>
            <person name="Nguyen B.-V."/>
            <person name="Okwuonu G.O."/>
            <person name="Palmeiri A."/>
            <person name="Pasternak S."/>
            <person name="Perez L.M."/>
            <person name="Phelps K.A."/>
            <person name="Plopper F.J."/>
            <person name="Qiang B."/>
            <person name="Raymond C."/>
            <person name="Rodriguez R."/>
            <person name="Saenphimmachak C."/>
            <person name="Santibanez J."/>
            <person name="Shen H."/>
            <person name="Shen Y."/>
            <person name="Subramanian S."/>
            <person name="Tabor P.E."/>
            <person name="Verduzco D."/>
            <person name="Waldron L."/>
            <person name="Wang J."/>
            <person name="Wang J."/>
            <person name="Wang Q."/>
            <person name="Williams G.A."/>
            <person name="Wong G.K.-S."/>
            <person name="Yao Z."/>
            <person name="Zhang J."/>
            <person name="Zhang X."/>
            <person name="Zhao G."/>
            <person name="Zhou J."/>
            <person name="Zhou Y."/>
            <person name="Nelson D."/>
            <person name="Lehrach H."/>
            <person name="Reinhardt R."/>
            <person name="Naylor S.L."/>
            <person name="Yang H."/>
            <person name="Olson M."/>
            <person name="Weinstock G."/>
            <person name="Gibbs R.A."/>
        </authorList>
    </citation>
    <scope>NUCLEOTIDE SEQUENCE [LARGE SCALE GENOMIC DNA]</scope>
</reference>
<organism>
    <name type="scientific">Homo sapiens</name>
    <name type="common">Human</name>
    <dbReference type="NCBI Taxonomy" id="9606"/>
    <lineage>
        <taxon>Eukaryota</taxon>
        <taxon>Metazoa</taxon>
        <taxon>Chordata</taxon>
        <taxon>Craniata</taxon>
        <taxon>Vertebrata</taxon>
        <taxon>Euteleostomi</taxon>
        <taxon>Mammalia</taxon>
        <taxon>Eutheria</taxon>
        <taxon>Euarchontoglires</taxon>
        <taxon>Primates</taxon>
        <taxon>Haplorrhini</taxon>
        <taxon>Catarrhini</taxon>
        <taxon>Hominidae</taxon>
        <taxon>Homo</taxon>
    </lineage>
</organism>
<gene>
    <name type="primary">PRR23A</name>
</gene>
<keyword id="KW-1185">Reference proteome</keyword>
<accession>A6NEV1</accession>
<dbReference type="EMBL" id="AC130416">
    <property type="status" value="NOT_ANNOTATED_CDS"/>
    <property type="molecule type" value="Genomic_DNA"/>
</dbReference>
<dbReference type="CCDS" id="CCDS46923.1"/>
<dbReference type="RefSeq" id="NP_001128131.1">
    <property type="nucleotide sequence ID" value="NM_001134659.1"/>
</dbReference>
<dbReference type="STRING" id="9606.ENSP00000372649"/>
<dbReference type="iPTMnet" id="A6NEV1"/>
<dbReference type="PhosphoSitePlus" id="A6NEV1"/>
<dbReference type="BioMuta" id="PRR23A"/>
<dbReference type="jPOST" id="A6NEV1"/>
<dbReference type="MassIVE" id="A6NEV1"/>
<dbReference type="PaxDb" id="9606-ENSP00000372649"/>
<dbReference type="Antibodypedia" id="68301">
    <property type="antibodies" value="56 antibodies from 12 providers"/>
</dbReference>
<dbReference type="DNASU" id="729627"/>
<dbReference type="Ensembl" id="ENST00000383163.4">
    <property type="protein sequence ID" value="ENSP00000372649.2"/>
    <property type="gene ID" value="ENSG00000206260.4"/>
</dbReference>
<dbReference type="GeneID" id="729627"/>
<dbReference type="KEGG" id="hsa:729627"/>
<dbReference type="MANE-Select" id="ENST00000383163.4">
    <property type="protein sequence ID" value="ENSP00000372649.2"/>
    <property type="RefSeq nucleotide sequence ID" value="NM_001134659.1"/>
    <property type="RefSeq protein sequence ID" value="NP_001128131.1"/>
</dbReference>
<dbReference type="UCSC" id="uc011bms.3">
    <property type="organism name" value="human"/>
</dbReference>
<dbReference type="AGR" id="HGNC:37172"/>
<dbReference type="CTD" id="729627"/>
<dbReference type="GeneCards" id="PRR23A"/>
<dbReference type="HGNC" id="HGNC:37172">
    <property type="gene designation" value="PRR23A"/>
</dbReference>
<dbReference type="HPA" id="ENSG00000206260">
    <property type="expression patterns" value="Tissue enriched (testis)"/>
</dbReference>
<dbReference type="neXtProt" id="NX_A6NEV1"/>
<dbReference type="PharmGKB" id="PA165698130"/>
<dbReference type="VEuPathDB" id="HostDB:ENSG00000206260"/>
<dbReference type="eggNOG" id="ENOG502RU0G">
    <property type="taxonomic scope" value="Eukaryota"/>
</dbReference>
<dbReference type="GeneTree" id="ENSGT00390000007772"/>
<dbReference type="HOGENOM" id="CLU_090685_0_0_1"/>
<dbReference type="InParanoid" id="A6NEV1"/>
<dbReference type="OMA" id="KRPPCKA"/>
<dbReference type="OrthoDB" id="9717112at2759"/>
<dbReference type="PAN-GO" id="A6NEV1">
    <property type="GO annotations" value="0 GO annotations based on evolutionary models"/>
</dbReference>
<dbReference type="PhylomeDB" id="A6NEV1"/>
<dbReference type="TreeFam" id="TF338612"/>
<dbReference type="PathwayCommons" id="A6NEV1"/>
<dbReference type="SignaLink" id="A6NEV1"/>
<dbReference type="BioGRID-ORCS" id="729627">
    <property type="hits" value="11 hits in 1064 CRISPR screens"/>
</dbReference>
<dbReference type="GenomeRNAi" id="729627"/>
<dbReference type="Pharos" id="A6NEV1">
    <property type="development level" value="Tdark"/>
</dbReference>
<dbReference type="PRO" id="PR:A6NEV1"/>
<dbReference type="Proteomes" id="UP000005640">
    <property type="component" value="Chromosome 3"/>
</dbReference>
<dbReference type="RNAct" id="A6NEV1">
    <property type="molecule type" value="protein"/>
</dbReference>
<dbReference type="Bgee" id="ENSG00000206260">
    <property type="expression patterns" value="Expressed in primordial germ cell in gonad and 4 other cell types or tissues"/>
</dbReference>
<dbReference type="InterPro" id="IPR018903">
    <property type="entry name" value="PRR23"/>
</dbReference>
<dbReference type="PANTHER" id="PTHR31813:SF4">
    <property type="entry name" value="PROLINE-RICH PROTEIN 23A"/>
    <property type="match status" value="1"/>
</dbReference>
<dbReference type="PANTHER" id="PTHR31813">
    <property type="entry name" value="PROLINE-RICH PROTEIN 23B"/>
    <property type="match status" value="1"/>
</dbReference>
<dbReference type="Pfam" id="PF10630">
    <property type="entry name" value="DUF2476"/>
    <property type="match status" value="1"/>
</dbReference>